<gene>
    <name type="primary">pts</name>
</gene>
<sequence length="147" mass="16679">MAESSGNPPAERIGYITRVQSFSACHRLHSLRLSDEENKEVYGKCNNPYGHGHNYKVEVTVRGKIDPVTGMVMNLTDLKKCIEEVIMIPLDHKNLDKDVPYFADVVSTTENLAVYIWDNMAKALPASLPYEIRIHETDKNIVVYRGE</sequence>
<comment type="function">
    <text>Involved in the biosynthesis of tetrahydrobiopterin, an essential cofactor of aromatic amino acid hydroxylases. Catalyzes the transformation of 7,8-dihydroneopterin triphosphate into 6-pyruvoyl tetrahydropterin.</text>
</comment>
<comment type="catalytic activity">
    <reaction>
        <text>7,8-dihydroneopterin 3'-triphosphate = 6-pyruvoyl-5,6,7,8-tetrahydropterin + triphosphate + H(+)</text>
        <dbReference type="Rhea" id="RHEA:22048"/>
        <dbReference type="ChEBI" id="CHEBI:15378"/>
        <dbReference type="ChEBI" id="CHEBI:18036"/>
        <dbReference type="ChEBI" id="CHEBI:58462"/>
        <dbReference type="ChEBI" id="CHEBI:136564"/>
        <dbReference type="EC" id="4.2.3.12"/>
    </reaction>
</comment>
<comment type="cofactor">
    <cofactor evidence="1">
        <name>Zn(2+)</name>
        <dbReference type="ChEBI" id="CHEBI:29105"/>
    </cofactor>
    <text evidence="1">Binds 1 zinc ion per subunit.</text>
</comment>
<comment type="pathway">
    <text>Cofactor biosynthesis; tetrahydrobiopterin biosynthesis; tetrahydrobiopterin from 7,8-dihydroneopterin triphosphate: step 1/3.</text>
</comment>
<comment type="subunit">
    <text evidence="1">Homohexamer formed of two homotrimers in a head to head fashion.</text>
</comment>
<comment type="alternative products">
    <event type="alternative splicing"/>
    <isoform>
        <id>Q90W95-1</id>
        <name>1</name>
        <sequence type="displayed"/>
    </isoform>
    <isoform>
        <id>Q90W95-2</id>
        <name>2</name>
        <sequence type="described" ref="VSP_005511"/>
    </isoform>
</comment>
<comment type="miscellaneous">
    <text>The active site is at the interface between 2 subunits. The proton acceptor Cys is on one subunit, and the charge relay system is on the other subunit.</text>
</comment>
<comment type="similarity">
    <text evidence="5">Belongs to the PTPS family.</text>
</comment>
<name>PTPS_POERE</name>
<organism>
    <name type="scientific">Poecilia reticulata</name>
    <name type="common">Guppy</name>
    <name type="synonym">Acanthophacelus reticulatus</name>
    <dbReference type="NCBI Taxonomy" id="8081"/>
    <lineage>
        <taxon>Eukaryota</taxon>
        <taxon>Metazoa</taxon>
        <taxon>Chordata</taxon>
        <taxon>Craniata</taxon>
        <taxon>Vertebrata</taxon>
        <taxon>Euteleostomi</taxon>
        <taxon>Actinopterygii</taxon>
        <taxon>Neopterygii</taxon>
        <taxon>Teleostei</taxon>
        <taxon>Neoteleostei</taxon>
        <taxon>Acanthomorphata</taxon>
        <taxon>Ovalentaria</taxon>
        <taxon>Atherinomorphae</taxon>
        <taxon>Cyprinodontiformes</taxon>
        <taxon>Poeciliidae</taxon>
        <taxon>Poeciliinae</taxon>
        <taxon>Poecilia</taxon>
    </lineage>
</organism>
<protein>
    <recommendedName>
        <fullName>6-pyruvoyl tetrahydrobiopterin synthase</fullName>
        <shortName>PTP synthase</shortName>
        <shortName>PTPS</shortName>
        <ecNumber>4.2.3.12</ecNumber>
    </recommendedName>
</protein>
<dbReference type="EC" id="4.2.3.12"/>
<dbReference type="EMBL" id="AY034101">
    <property type="protein sequence ID" value="AAK59697.1"/>
    <property type="molecule type" value="mRNA"/>
</dbReference>
<dbReference type="EMBL" id="AY034102">
    <property type="protein sequence ID" value="AAK59698.1"/>
    <property type="molecule type" value="mRNA"/>
</dbReference>
<dbReference type="RefSeq" id="NP_001284375.1">
    <molecule id="Q90W95-2"/>
    <property type="nucleotide sequence ID" value="NM_001297446.1"/>
</dbReference>
<dbReference type="SMR" id="Q90W95"/>
<dbReference type="STRING" id="8081.ENSPREP00000026753"/>
<dbReference type="GeneID" id="103481923"/>
<dbReference type="KEGG" id="pret:103481923"/>
<dbReference type="CTD" id="5805"/>
<dbReference type="OrthoDB" id="14045at2759"/>
<dbReference type="UniPathway" id="UPA00849">
    <property type="reaction ID" value="UER00819"/>
</dbReference>
<dbReference type="Proteomes" id="UP000242638">
    <property type="component" value="Unassembled WGS sequence"/>
</dbReference>
<dbReference type="GO" id="GO:0005739">
    <property type="term" value="C:mitochondrion"/>
    <property type="evidence" value="ECO:0007669"/>
    <property type="project" value="TreeGrafter"/>
</dbReference>
<dbReference type="GO" id="GO:0003874">
    <property type="term" value="F:6-pyruvoyltetrahydropterin synthase activity"/>
    <property type="evidence" value="ECO:0007669"/>
    <property type="project" value="UniProtKB-EC"/>
</dbReference>
<dbReference type="GO" id="GO:0046872">
    <property type="term" value="F:metal ion binding"/>
    <property type="evidence" value="ECO:0007669"/>
    <property type="project" value="UniProtKB-KW"/>
</dbReference>
<dbReference type="GO" id="GO:0006729">
    <property type="term" value="P:tetrahydrobiopterin biosynthetic process"/>
    <property type="evidence" value="ECO:0007669"/>
    <property type="project" value="UniProtKB-UniPathway"/>
</dbReference>
<dbReference type="CDD" id="cd00470">
    <property type="entry name" value="PTPS"/>
    <property type="match status" value="1"/>
</dbReference>
<dbReference type="FunFam" id="3.30.479.10:FF:000003">
    <property type="entry name" value="6-pyruvoyl tetrahydrobiopterin synthase"/>
    <property type="match status" value="1"/>
</dbReference>
<dbReference type="Gene3D" id="3.30.479.10">
    <property type="entry name" value="6-pyruvoyl tetrahydropterin synthase/QueD"/>
    <property type="match status" value="1"/>
</dbReference>
<dbReference type="InterPro" id="IPR007115">
    <property type="entry name" value="6-PTP_synth/QueD"/>
</dbReference>
<dbReference type="InterPro" id="IPR038418">
    <property type="entry name" value="6-PTP_synth/QueD_sf"/>
</dbReference>
<dbReference type="InterPro" id="IPR022470">
    <property type="entry name" value="PTPS_Cys_AS"/>
</dbReference>
<dbReference type="InterPro" id="IPR022469">
    <property type="entry name" value="PTPS_His_AS"/>
</dbReference>
<dbReference type="NCBIfam" id="TIGR00039">
    <property type="entry name" value="6PTHBS"/>
    <property type="match status" value="1"/>
</dbReference>
<dbReference type="PANTHER" id="PTHR12589:SF7">
    <property type="entry name" value="6-PYRUVOYL TETRAHYDROBIOPTERIN SYNTHASE"/>
    <property type="match status" value="1"/>
</dbReference>
<dbReference type="PANTHER" id="PTHR12589">
    <property type="entry name" value="PYRUVOYL TETRAHYDROBIOPTERIN SYNTHASE"/>
    <property type="match status" value="1"/>
</dbReference>
<dbReference type="Pfam" id="PF01242">
    <property type="entry name" value="PTPS"/>
    <property type="match status" value="1"/>
</dbReference>
<dbReference type="SUPFAM" id="SSF55620">
    <property type="entry name" value="Tetrahydrobiopterin biosynthesis enzymes-like"/>
    <property type="match status" value="1"/>
</dbReference>
<dbReference type="PROSITE" id="PS00987">
    <property type="entry name" value="PTPS_1"/>
    <property type="match status" value="1"/>
</dbReference>
<dbReference type="PROSITE" id="PS00988">
    <property type="entry name" value="PTPS_2"/>
    <property type="match status" value="1"/>
</dbReference>
<accession>Q90W95</accession>
<accession>Q90W94</accession>
<keyword id="KW-0025">Alternative splicing</keyword>
<keyword id="KW-0456">Lyase</keyword>
<keyword id="KW-0479">Metal-binding</keyword>
<keyword id="KW-1185">Reference proteome</keyword>
<keyword id="KW-0783">Tetrahydrobiopterin biosynthesis</keyword>
<keyword id="KW-0862">Zinc</keyword>
<proteinExistence type="evidence at transcript level"/>
<feature type="chain" id="PRO_0000057916" description="6-pyruvoyl tetrahydrobiopterin synthase">
    <location>
        <begin position="1"/>
        <end position="147"/>
    </location>
</feature>
<feature type="active site" description="Proton acceptor" evidence="2">
    <location>
        <position position="45"/>
    </location>
</feature>
<feature type="active site" description="Charge relay system" evidence="3">
    <location>
        <position position="92"/>
    </location>
</feature>
<feature type="active site" description="Charge relay system" evidence="3">
    <location>
        <position position="136"/>
    </location>
</feature>
<feature type="binding site" evidence="2">
    <location>
        <position position="26"/>
    </location>
    <ligand>
        <name>Zn(2+)</name>
        <dbReference type="ChEBI" id="CHEBI:29105"/>
    </ligand>
</feature>
<feature type="binding site" evidence="2">
    <location>
        <position position="51"/>
    </location>
    <ligand>
        <name>Zn(2+)</name>
        <dbReference type="ChEBI" id="CHEBI:29105"/>
    </ligand>
</feature>
<feature type="binding site" evidence="2">
    <location>
        <position position="53"/>
    </location>
    <ligand>
        <name>Zn(2+)</name>
        <dbReference type="ChEBI" id="CHEBI:29105"/>
    </ligand>
</feature>
<feature type="splice variant" id="VSP_005511" description="In isoform 2." evidence="4">
    <original>EVIMIPLDHKNLDKDVPYFADVV</original>
    <variation>IRTFHQTFLLSLT</variation>
    <location>
        <begin position="84"/>
        <end position="106"/>
    </location>
</feature>
<evidence type="ECO:0000250" key="1"/>
<evidence type="ECO:0000255" key="2">
    <source>
        <dbReference type="PROSITE-ProRule" id="PRU10123"/>
    </source>
</evidence>
<evidence type="ECO:0000255" key="3">
    <source>
        <dbReference type="PROSITE-ProRule" id="PRU10124"/>
    </source>
</evidence>
<evidence type="ECO:0000303" key="4">
    <source ref="1"/>
</evidence>
<evidence type="ECO:0000305" key="5"/>
<reference key="1">
    <citation type="submission" date="2001-05" db="EMBL/GenBank/DDBJ databases">
        <title>Molecular cloning of 6-pyruvoyl tetrahydropterin synthase genes from guppies.</title>
        <authorList>
            <person name="Ben J."/>
            <person name="Lim T.-M."/>
            <person name="Chan W.-K."/>
            <person name="Phang V.P.E."/>
        </authorList>
    </citation>
    <scope>NUCLEOTIDE SEQUENCE [MRNA] (ISOFORMS 1 AND 2)</scope>
    <source>
        <tissue>Caudal fin</tissue>
    </source>
</reference>